<accession>Q5RA02</accession>
<gene>
    <name type="primary">XPOT</name>
</gene>
<evidence type="ECO:0000250" key="1"/>
<evidence type="ECO:0000250" key="2">
    <source>
        <dbReference type="UniProtKB" id="O43592"/>
    </source>
</evidence>
<feature type="chain" id="PRO_0000237677" description="Exportin-T">
    <location>
        <begin position="1"/>
        <end position="962"/>
    </location>
</feature>
<feature type="modified residue" description="N-acetylmethionine" evidence="2">
    <location>
        <position position="1"/>
    </location>
</feature>
<feature type="modified residue" description="N6-acetyllysine" evidence="2">
    <location>
        <position position="634"/>
    </location>
</feature>
<sequence>MDEQALLGLNPNADSDFRQRALAYFEQLKISPDAWQVCAEALAQRTYSDDHVKFFCFQVLEHQVKYKYSELTTVQQQLIRETLISWLQAQMLNPQPEKTFIRNKAAQVFALLFVTEYLTKWPKFFFDILSVVDLNPRGVDLYLRILMAIDSELVDRDVVHTSEEARRNTLIKDTMREQCIPNLVESWYQILQNYQYTNSEVTCQCLEVVGAYVSWIDLSLIANDRFINMLLGHMSIEVLREEACDCLFEVVNKGMDPVDKMKLVESLCQVLQSAGFFSIDQEEDVDFLARFSKLVNGMGQSLIVSWSKLIKNGDIKNAQEALQAIETKVALMLQLLIHEDDDISSNIIGFCYDYLHILKQLTVLSDQQKANVEAIMLAVMKKLTYDEEYNFENEGEDGAMFVEYRKQLKLLLDRLAQVSPELLLASVRRVFTSTLQNWQTTRFMEVEVAIRLLYMLAEALPVSHGAHFSGDVSKASALQDMMRTLVTSGVSSYQHTSVTLEFFETVVRYEKFFTVEPQHIPCVLMAFLDHRGLRHSSAKVRSRTAYLFSRFVKSLNKQMNPFIEDILNRIQDLLELSPPENGHQSLLSSDDQLFIYETAGVLIVNSEYPAERKQALMRNLLTPLMEKFKILLEKLMLAQDEERQASLADCLNHAVGFASRTSKAFSNKQTVKQCGCSEVYLDCLQTFLPALSCPLQKDILRSGVRTFLHRMIICLEEEVLPFIPSASEHMLKDCEAKDLQEFIPLINQITAKFKIQVSPFLQQMFMPLLHAIFEVLLRPAEENDQSAALEKQMLRRSYFAFLQTVTSSGMSEVIANQGAENVERVLVTVIQGAVEYPDPIAQKTCFIILSKLVELWGGKDGPVGFADFVYKHIVPACFLAPLKQTFDLADAQTVLALSECAVTLKTIHLKRGPECVQYLQQEYLPSLQVAPEIIQEFCQALQQPDAKVFKNYLKVFFQRAKP</sequence>
<keyword id="KW-0007">Acetylation</keyword>
<keyword id="KW-0963">Cytoplasm</keyword>
<keyword id="KW-0539">Nucleus</keyword>
<keyword id="KW-1185">Reference proteome</keyword>
<keyword id="KW-0694">RNA-binding</keyword>
<keyword id="KW-0813">Transport</keyword>
<keyword id="KW-0820">tRNA-binding</keyword>
<reference key="1">
    <citation type="submission" date="2004-11" db="EMBL/GenBank/DDBJ databases">
        <authorList>
            <consortium name="The German cDNA consortium"/>
        </authorList>
    </citation>
    <scope>NUCLEOTIDE SEQUENCE [LARGE SCALE MRNA]</scope>
    <source>
        <tissue>Brain cortex</tissue>
    </source>
</reference>
<name>XPOT_PONAB</name>
<protein>
    <recommendedName>
        <fullName>Exportin-T</fullName>
    </recommendedName>
    <alternativeName>
        <fullName>Exportin(tRNA)</fullName>
    </alternativeName>
    <alternativeName>
        <fullName>tRNA exportin</fullName>
    </alternativeName>
</protein>
<proteinExistence type="evidence at transcript level"/>
<dbReference type="EMBL" id="CR859227">
    <property type="protein sequence ID" value="CAH91408.1"/>
    <property type="molecule type" value="mRNA"/>
</dbReference>
<dbReference type="RefSeq" id="NP_001125829.1">
    <property type="nucleotide sequence ID" value="NM_001132357.1"/>
</dbReference>
<dbReference type="SMR" id="Q5RA02"/>
<dbReference type="FunCoup" id="Q5RA02">
    <property type="interactions" value="4340"/>
</dbReference>
<dbReference type="STRING" id="9601.ENSPPYP00000005384"/>
<dbReference type="GeneID" id="100172757"/>
<dbReference type="KEGG" id="pon:100172757"/>
<dbReference type="CTD" id="11260"/>
<dbReference type="eggNOG" id="KOG2021">
    <property type="taxonomic scope" value="Eukaryota"/>
</dbReference>
<dbReference type="InParanoid" id="Q5RA02"/>
<dbReference type="OrthoDB" id="26399at2759"/>
<dbReference type="Proteomes" id="UP000001595">
    <property type="component" value="Unplaced"/>
</dbReference>
<dbReference type="GO" id="GO:0005737">
    <property type="term" value="C:cytoplasm"/>
    <property type="evidence" value="ECO:0007669"/>
    <property type="project" value="UniProtKB-SubCell"/>
</dbReference>
<dbReference type="GO" id="GO:0016363">
    <property type="term" value="C:nuclear matrix"/>
    <property type="evidence" value="ECO:0007669"/>
    <property type="project" value="TreeGrafter"/>
</dbReference>
<dbReference type="GO" id="GO:0005643">
    <property type="term" value="C:nuclear pore"/>
    <property type="evidence" value="ECO:0007669"/>
    <property type="project" value="TreeGrafter"/>
</dbReference>
<dbReference type="GO" id="GO:0031267">
    <property type="term" value="F:small GTPase binding"/>
    <property type="evidence" value="ECO:0007669"/>
    <property type="project" value="InterPro"/>
</dbReference>
<dbReference type="GO" id="GO:0000049">
    <property type="term" value="F:tRNA binding"/>
    <property type="evidence" value="ECO:0007669"/>
    <property type="project" value="UniProtKB-KW"/>
</dbReference>
<dbReference type="GO" id="GO:0006886">
    <property type="term" value="P:intracellular protein transport"/>
    <property type="evidence" value="ECO:0007669"/>
    <property type="project" value="InterPro"/>
</dbReference>
<dbReference type="GO" id="GO:0071528">
    <property type="term" value="P:tRNA re-export from nucleus"/>
    <property type="evidence" value="ECO:0007669"/>
    <property type="project" value="InterPro"/>
</dbReference>
<dbReference type="FunFam" id="1.25.10.10:FF:000105">
    <property type="entry name" value="Exportin for tRNA"/>
    <property type="match status" value="1"/>
</dbReference>
<dbReference type="Gene3D" id="1.25.10.10">
    <property type="entry name" value="Leucine-rich Repeat Variant"/>
    <property type="match status" value="1"/>
</dbReference>
<dbReference type="InterPro" id="IPR011989">
    <property type="entry name" value="ARM-like"/>
</dbReference>
<dbReference type="InterPro" id="IPR016024">
    <property type="entry name" value="ARM-type_fold"/>
</dbReference>
<dbReference type="InterPro" id="IPR013598">
    <property type="entry name" value="Exportin-1/Importin-b-like"/>
</dbReference>
<dbReference type="InterPro" id="IPR045546">
    <property type="entry name" value="Exportin-T_C"/>
</dbReference>
<dbReference type="InterPro" id="IPR001494">
    <property type="entry name" value="Importin-beta_N"/>
</dbReference>
<dbReference type="InterPro" id="IPR040017">
    <property type="entry name" value="XPOT"/>
</dbReference>
<dbReference type="PANTHER" id="PTHR15952:SF11">
    <property type="entry name" value="EXPORTIN-T"/>
    <property type="match status" value="1"/>
</dbReference>
<dbReference type="PANTHER" id="PTHR15952">
    <property type="entry name" value="EXPORTIN-T/LOS1"/>
    <property type="match status" value="1"/>
</dbReference>
<dbReference type="Pfam" id="PF19282">
    <property type="entry name" value="Exportin-T"/>
    <property type="match status" value="1"/>
</dbReference>
<dbReference type="Pfam" id="PF03810">
    <property type="entry name" value="IBN_N"/>
    <property type="match status" value="1"/>
</dbReference>
<dbReference type="Pfam" id="PF08389">
    <property type="entry name" value="Xpo1"/>
    <property type="match status" value="1"/>
</dbReference>
<dbReference type="SMART" id="SM00913">
    <property type="entry name" value="IBN_N"/>
    <property type="match status" value="1"/>
</dbReference>
<dbReference type="SUPFAM" id="SSF48371">
    <property type="entry name" value="ARM repeat"/>
    <property type="match status" value="1"/>
</dbReference>
<organism>
    <name type="scientific">Pongo abelii</name>
    <name type="common">Sumatran orangutan</name>
    <name type="synonym">Pongo pygmaeus abelii</name>
    <dbReference type="NCBI Taxonomy" id="9601"/>
    <lineage>
        <taxon>Eukaryota</taxon>
        <taxon>Metazoa</taxon>
        <taxon>Chordata</taxon>
        <taxon>Craniata</taxon>
        <taxon>Vertebrata</taxon>
        <taxon>Euteleostomi</taxon>
        <taxon>Mammalia</taxon>
        <taxon>Eutheria</taxon>
        <taxon>Euarchontoglires</taxon>
        <taxon>Primates</taxon>
        <taxon>Haplorrhini</taxon>
        <taxon>Catarrhini</taxon>
        <taxon>Hominidae</taxon>
        <taxon>Pongo</taxon>
    </lineage>
</organism>
<comment type="function">
    <text evidence="1">Mediates the nuclear export of aminoacylated tRNAs. In the nucleus binds to tRNA and to the GTPase Ran in its active GTP-bound form. Docking of this trimeric complex to the nuclear pore complex (NPC) is mediated through binding to nucleoporins. Upon transit of a nuclear export complex into the cytoplasm, disassembling of the complex and hydrolysis of Ran-GTP to Ran-GDP (induced by RANBP1 and RANGAP1, respectively) cause release of the tRNA from the export receptor. XPOT then return to the nuclear compartment and mediate another round of transport. The directionality of nuclear export is thought to be conferred by an asymmetric distribution of the GTP- and GDP-bound forms of Ran between the cytoplasm and nucleus (By similarity).</text>
</comment>
<comment type="subunit">
    <text evidence="1">Found in a complex with XPOT, Ran and tRNA. Probably found in a complex with nucleoporins. Interacts with Ran and tRNA in a GTP-dependent manner (By similarity).</text>
</comment>
<comment type="subcellular location">
    <subcellularLocation>
        <location evidence="1">Nucleus</location>
    </subcellularLocation>
    <subcellularLocation>
        <location evidence="1">Cytoplasm</location>
    </subcellularLocation>
    <text evidence="1">Nuclear, once bound to tRNA and Ran the complex translocates to the cytoplasm. Shuttles between the nucleus and the cytoplasm (By similarity).</text>
</comment>